<name>DOF18_ARATH</name>
<organism>
    <name type="scientific">Arabidopsis thaliana</name>
    <name type="common">Mouse-ear cress</name>
    <dbReference type="NCBI Taxonomy" id="3702"/>
    <lineage>
        <taxon>Eukaryota</taxon>
        <taxon>Viridiplantae</taxon>
        <taxon>Streptophyta</taxon>
        <taxon>Embryophyta</taxon>
        <taxon>Tracheophyta</taxon>
        <taxon>Spermatophyta</taxon>
        <taxon>Magnoliopsida</taxon>
        <taxon>eudicotyledons</taxon>
        <taxon>Gunneridae</taxon>
        <taxon>Pentapetalae</taxon>
        <taxon>rosids</taxon>
        <taxon>malvids</taxon>
        <taxon>Brassicales</taxon>
        <taxon>Brassicaceae</taxon>
        <taxon>Camelineae</taxon>
        <taxon>Arabidopsis</taxon>
    </lineage>
</organism>
<keyword id="KW-0238">DNA-binding</keyword>
<keyword id="KW-0479">Metal-binding</keyword>
<keyword id="KW-0539">Nucleus</keyword>
<keyword id="KW-1185">Reference proteome</keyword>
<keyword id="KW-0804">Transcription</keyword>
<keyword id="KW-0805">Transcription regulation</keyword>
<keyword id="KW-0862">Zinc</keyword>
<keyword id="KW-0863">Zinc-finger</keyword>
<feature type="chain" id="PRO_0000074270" description="Dof zinc finger protein DOF1.8">
    <location>
        <begin position="1"/>
        <end position="352"/>
    </location>
</feature>
<feature type="zinc finger region" description="Dof-type" evidence="2">
    <location>
        <begin position="49"/>
        <end position="103"/>
    </location>
</feature>
<feature type="region of interest" description="Disordered" evidence="3">
    <location>
        <begin position="24"/>
        <end position="46"/>
    </location>
</feature>
<feature type="region of interest" description="Disordered" evidence="3">
    <location>
        <begin position="93"/>
        <end position="136"/>
    </location>
</feature>
<feature type="region of interest" description="Disordered" evidence="3">
    <location>
        <begin position="265"/>
        <end position="334"/>
    </location>
</feature>
<feature type="compositionally biased region" description="Basic and acidic residues" evidence="3">
    <location>
        <begin position="37"/>
        <end position="46"/>
    </location>
</feature>
<feature type="compositionally biased region" description="Low complexity" evidence="3">
    <location>
        <begin position="104"/>
        <end position="129"/>
    </location>
</feature>
<feature type="compositionally biased region" description="Basic and acidic residues" evidence="3">
    <location>
        <begin position="310"/>
        <end position="323"/>
    </location>
</feature>
<feature type="binding site" evidence="2">
    <location>
        <position position="51"/>
    </location>
    <ligand>
        <name>Zn(2+)</name>
        <dbReference type="ChEBI" id="CHEBI:29105"/>
    </ligand>
</feature>
<feature type="binding site" evidence="2">
    <location>
        <position position="54"/>
    </location>
    <ligand>
        <name>Zn(2+)</name>
        <dbReference type="ChEBI" id="CHEBI:29105"/>
    </ligand>
</feature>
<feature type="binding site" evidence="2">
    <location>
        <position position="76"/>
    </location>
    <ligand>
        <name>Zn(2+)</name>
        <dbReference type="ChEBI" id="CHEBI:29105"/>
    </ligand>
</feature>
<feature type="binding site" evidence="2">
    <location>
        <position position="79"/>
    </location>
    <ligand>
        <name>Zn(2+)</name>
        <dbReference type="ChEBI" id="CHEBI:29105"/>
    </ligand>
</feature>
<feature type="sequence conflict" description="In Ref. 4; AAM61461." evidence="4" ref="4">
    <original>N</original>
    <variation>H</variation>
    <location>
        <position position="180"/>
    </location>
</feature>
<feature type="sequence conflict" description="In Ref. 4; AAM61461." evidence="4" ref="4">
    <original>S</original>
    <variation>A</variation>
    <location>
        <position position="208"/>
    </location>
</feature>
<feature type="sequence conflict" description="In Ref. 4; AAM61461." evidence="4" ref="4">
    <original>N</original>
    <variation>I</variation>
    <location>
        <position position="311"/>
    </location>
</feature>
<feature type="sequence conflict" description="In Ref. 4; AAM61461." evidence="4" ref="4">
    <original>H</original>
    <variation>R</variation>
    <location>
        <position position="315"/>
    </location>
</feature>
<feature type="sequence conflict" description="In Ref. 4; AAM61461." evidence="4" ref="4">
    <original>G</original>
    <variation>GG</variation>
    <location>
        <position position="349"/>
    </location>
</feature>
<sequence>MDTAKWPQEFVVKPMNEIVTNTCLKQQSNPPSPATPVERKARPEKDQALNCPRCNSLNTKFCYYNNYSLTQPRYFCKDCRRYWTAGGSLRNIPVGGGVRKNKRSSSNSSSSSPSSSSSSKKPLFANNNTPTPPLPHLNPKIGEAAATKVQDLTFSQGFGNAHEVKDLNLAFSQGFGIGHNHHSSIPEFLQVVPSSSMKNNPLVSTSSSLELLGISSSSASSNSRPAFMSYPNVHDSSVYTASGFGLSYPQFQEFMRPALGFSLDGGDPLRQEEGSSGTNNGRPLLPFESLLKLPVSSSSTNSGGNGNLKENNDEHSDHEHEKEEGEADQSVGFWSGMLSAGASAAASGGSWQ</sequence>
<comment type="function">
    <text evidence="1">Transcription factor that binds specifically to a 5'-AA[AG]G-3' consensus core sequence.</text>
</comment>
<comment type="subcellular location">
    <subcellularLocation>
        <location evidence="4">Nucleus</location>
    </subcellularLocation>
</comment>
<comment type="sequence caution" evidence="4">
    <conflict type="erroneous gene model prediction">
        <sequence resource="EMBL-CDS" id="AAF19678"/>
    </conflict>
</comment>
<accession>Q84JQ8</accession>
<accession>Q8LFE3</accession>
<accession>Q9SGV3</accession>
<dbReference type="EMBL" id="AC009519">
    <property type="protein sequence ID" value="AAF19678.1"/>
    <property type="status" value="ALT_SEQ"/>
    <property type="molecule type" value="Genomic_DNA"/>
</dbReference>
<dbReference type="EMBL" id="CP002684">
    <property type="protein sequence ID" value="AEE34262.1"/>
    <property type="molecule type" value="Genomic_DNA"/>
</dbReference>
<dbReference type="EMBL" id="BT004047">
    <property type="protein sequence ID" value="AAO42079.1"/>
    <property type="molecule type" value="mRNA"/>
</dbReference>
<dbReference type="EMBL" id="BT005148">
    <property type="protein sequence ID" value="AAO50681.1"/>
    <property type="molecule type" value="mRNA"/>
</dbReference>
<dbReference type="EMBL" id="AY084898">
    <property type="protein sequence ID" value="AAM61461.1"/>
    <property type="molecule type" value="mRNA"/>
</dbReference>
<dbReference type="PIR" id="E96669">
    <property type="entry name" value="E96669"/>
</dbReference>
<dbReference type="RefSeq" id="NP_564836.1">
    <property type="nucleotide sequence ID" value="NM_105137.3"/>
</dbReference>
<dbReference type="BioGRID" id="27991">
    <property type="interactions" value="7"/>
</dbReference>
<dbReference type="FunCoup" id="Q84JQ8">
    <property type="interactions" value="2"/>
</dbReference>
<dbReference type="IntAct" id="Q84JQ8">
    <property type="interactions" value="1"/>
</dbReference>
<dbReference type="STRING" id="3702.Q84JQ8"/>
<dbReference type="GlyGen" id="Q84JQ8">
    <property type="glycosylation" value="4 sites, 1 O-linked glycan (2 sites)"/>
</dbReference>
<dbReference type="iPTMnet" id="Q84JQ8"/>
<dbReference type="PaxDb" id="3702-AT1G64620.1"/>
<dbReference type="ProteomicsDB" id="222106"/>
<dbReference type="EnsemblPlants" id="AT1G64620.1">
    <property type="protein sequence ID" value="AT1G64620.1"/>
    <property type="gene ID" value="AT1G64620"/>
</dbReference>
<dbReference type="GeneID" id="842770"/>
<dbReference type="Gramene" id="AT1G64620.1">
    <property type="protein sequence ID" value="AT1G64620.1"/>
    <property type="gene ID" value="AT1G64620"/>
</dbReference>
<dbReference type="KEGG" id="ath:AT1G64620"/>
<dbReference type="Araport" id="AT1G64620"/>
<dbReference type="TAIR" id="AT1G64620">
    <property type="gene designation" value="DOF1.8"/>
</dbReference>
<dbReference type="eggNOG" id="ENOG502QPN9">
    <property type="taxonomic scope" value="Eukaryota"/>
</dbReference>
<dbReference type="HOGENOM" id="CLU_036438_5_1_1"/>
<dbReference type="InParanoid" id="Q84JQ8"/>
<dbReference type="OMA" id="HGFGNAH"/>
<dbReference type="PhylomeDB" id="Q84JQ8"/>
<dbReference type="PRO" id="PR:Q84JQ8"/>
<dbReference type="Proteomes" id="UP000006548">
    <property type="component" value="Chromosome 1"/>
</dbReference>
<dbReference type="ExpressionAtlas" id="Q84JQ8">
    <property type="expression patterns" value="baseline and differential"/>
</dbReference>
<dbReference type="GO" id="GO:0005634">
    <property type="term" value="C:nucleus"/>
    <property type="evidence" value="ECO:0007669"/>
    <property type="project" value="UniProtKB-SubCell"/>
</dbReference>
<dbReference type="GO" id="GO:0003700">
    <property type="term" value="F:DNA-binding transcription factor activity"/>
    <property type="evidence" value="ECO:0000250"/>
    <property type="project" value="TAIR"/>
</dbReference>
<dbReference type="GO" id="GO:0000976">
    <property type="term" value="F:transcription cis-regulatory region binding"/>
    <property type="evidence" value="ECO:0000353"/>
    <property type="project" value="TAIR"/>
</dbReference>
<dbReference type="GO" id="GO:0008270">
    <property type="term" value="F:zinc ion binding"/>
    <property type="evidence" value="ECO:0007669"/>
    <property type="project" value="UniProtKB-KW"/>
</dbReference>
<dbReference type="GO" id="GO:0006355">
    <property type="term" value="P:regulation of DNA-templated transcription"/>
    <property type="evidence" value="ECO:0000304"/>
    <property type="project" value="TAIR"/>
</dbReference>
<dbReference type="InterPro" id="IPR045174">
    <property type="entry name" value="Dof"/>
</dbReference>
<dbReference type="InterPro" id="IPR003851">
    <property type="entry name" value="Znf_Dof"/>
</dbReference>
<dbReference type="PANTHER" id="PTHR31992">
    <property type="entry name" value="DOF ZINC FINGER PROTEIN DOF1.4-RELATED"/>
    <property type="match status" value="1"/>
</dbReference>
<dbReference type="PANTHER" id="PTHR31992:SF340">
    <property type="entry name" value="DOF ZINC FINGER PROTEIN DOF1.8"/>
    <property type="match status" value="1"/>
</dbReference>
<dbReference type="Pfam" id="PF02701">
    <property type="entry name" value="Zn_ribbon_Dof"/>
    <property type="match status" value="1"/>
</dbReference>
<dbReference type="PROSITE" id="PS01361">
    <property type="entry name" value="ZF_DOF_1"/>
    <property type="match status" value="1"/>
</dbReference>
<dbReference type="PROSITE" id="PS50884">
    <property type="entry name" value="ZF_DOF_2"/>
    <property type="match status" value="1"/>
</dbReference>
<protein>
    <recommendedName>
        <fullName>Dof zinc finger protein DOF1.8</fullName>
        <shortName>AtDOF1.8</shortName>
    </recommendedName>
</protein>
<gene>
    <name type="primary">DOF1.8</name>
    <name type="ordered locus">At1g64620</name>
    <name type="ORF">F1N19.19</name>
</gene>
<evidence type="ECO:0000250" key="1"/>
<evidence type="ECO:0000255" key="2">
    <source>
        <dbReference type="PROSITE-ProRule" id="PRU00071"/>
    </source>
</evidence>
<evidence type="ECO:0000256" key="3">
    <source>
        <dbReference type="SAM" id="MobiDB-lite"/>
    </source>
</evidence>
<evidence type="ECO:0000305" key="4"/>
<reference key="1">
    <citation type="journal article" date="2000" name="Nature">
        <title>Sequence and analysis of chromosome 1 of the plant Arabidopsis thaliana.</title>
        <authorList>
            <person name="Theologis A."/>
            <person name="Ecker J.R."/>
            <person name="Palm C.J."/>
            <person name="Federspiel N.A."/>
            <person name="Kaul S."/>
            <person name="White O."/>
            <person name="Alonso J."/>
            <person name="Altafi H."/>
            <person name="Araujo R."/>
            <person name="Bowman C.L."/>
            <person name="Brooks S.Y."/>
            <person name="Buehler E."/>
            <person name="Chan A."/>
            <person name="Chao Q."/>
            <person name="Chen H."/>
            <person name="Cheuk R.F."/>
            <person name="Chin C.W."/>
            <person name="Chung M.K."/>
            <person name="Conn L."/>
            <person name="Conway A.B."/>
            <person name="Conway A.R."/>
            <person name="Creasy T.H."/>
            <person name="Dewar K."/>
            <person name="Dunn P."/>
            <person name="Etgu P."/>
            <person name="Feldblyum T.V."/>
            <person name="Feng J.-D."/>
            <person name="Fong B."/>
            <person name="Fujii C.Y."/>
            <person name="Gill J.E."/>
            <person name="Goldsmith A.D."/>
            <person name="Haas B."/>
            <person name="Hansen N.F."/>
            <person name="Hughes B."/>
            <person name="Huizar L."/>
            <person name="Hunter J.L."/>
            <person name="Jenkins J."/>
            <person name="Johnson-Hopson C."/>
            <person name="Khan S."/>
            <person name="Khaykin E."/>
            <person name="Kim C.J."/>
            <person name="Koo H.L."/>
            <person name="Kremenetskaia I."/>
            <person name="Kurtz D.B."/>
            <person name="Kwan A."/>
            <person name="Lam B."/>
            <person name="Langin-Hooper S."/>
            <person name="Lee A."/>
            <person name="Lee J.M."/>
            <person name="Lenz C.A."/>
            <person name="Li J.H."/>
            <person name="Li Y.-P."/>
            <person name="Lin X."/>
            <person name="Liu S.X."/>
            <person name="Liu Z.A."/>
            <person name="Luros J.S."/>
            <person name="Maiti R."/>
            <person name="Marziali A."/>
            <person name="Militscher J."/>
            <person name="Miranda M."/>
            <person name="Nguyen M."/>
            <person name="Nierman W.C."/>
            <person name="Osborne B.I."/>
            <person name="Pai G."/>
            <person name="Peterson J."/>
            <person name="Pham P.K."/>
            <person name="Rizzo M."/>
            <person name="Rooney T."/>
            <person name="Rowley D."/>
            <person name="Sakano H."/>
            <person name="Salzberg S.L."/>
            <person name="Schwartz J.R."/>
            <person name="Shinn P."/>
            <person name="Southwick A.M."/>
            <person name="Sun H."/>
            <person name="Tallon L.J."/>
            <person name="Tambunga G."/>
            <person name="Toriumi M.J."/>
            <person name="Town C.D."/>
            <person name="Utterback T."/>
            <person name="Van Aken S."/>
            <person name="Vaysberg M."/>
            <person name="Vysotskaia V.S."/>
            <person name="Walker M."/>
            <person name="Wu D."/>
            <person name="Yu G."/>
            <person name="Fraser C.M."/>
            <person name="Venter J.C."/>
            <person name="Davis R.W."/>
        </authorList>
    </citation>
    <scope>NUCLEOTIDE SEQUENCE [LARGE SCALE GENOMIC DNA]</scope>
    <source>
        <strain>cv. Columbia</strain>
    </source>
</reference>
<reference key="2">
    <citation type="journal article" date="2017" name="Plant J.">
        <title>Araport11: a complete reannotation of the Arabidopsis thaliana reference genome.</title>
        <authorList>
            <person name="Cheng C.Y."/>
            <person name="Krishnakumar V."/>
            <person name="Chan A.P."/>
            <person name="Thibaud-Nissen F."/>
            <person name="Schobel S."/>
            <person name="Town C.D."/>
        </authorList>
    </citation>
    <scope>GENOME REANNOTATION</scope>
    <source>
        <strain>cv. Columbia</strain>
    </source>
</reference>
<reference key="3">
    <citation type="journal article" date="2003" name="Science">
        <title>Empirical analysis of transcriptional activity in the Arabidopsis genome.</title>
        <authorList>
            <person name="Yamada K."/>
            <person name="Lim J."/>
            <person name="Dale J.M."/>
            <person name="Chen H."/>
            <person name="Shinn P."/>
            <person name="Palm C.J."/>
            <person name="Southwick A.M."/>
            <person name="Wu H.C."/>
            <person name="Kim C.J."/>
            <person name="Nguyen M."/>
            <person name="Pham P.K."/>
            <person name="Cheuk R.F."/>
            <person name="Karlin-Newmann G."/>
            <person name="Liu S.X."/>
            <person name="Lam B."/>
            <person name="Sakano H."/>
            <person name="Wu T."/>
            <person name="Yu G."/>
            <person name="Miranda M."/>
            <person name="Quach H.L."/>
            <person name="Tripp M."/>
            <person name="Chang C.H."/>
            <person name="Lee J.M."/>
            <person name="Toriumi M.J."/>
            <person name="Chan M.M."/>
            <person name="Tang C.C."/>
            <person name="Onodera C.S."/>
            <person name="Deng J.M."/>
            <person name="Akiyama K."/>
            <person name="Ansari Y."/>
            <person name="Arakawa T."/>
            <person name="Banh J."/>
            <person name="Banno F."/>
            <person name="Bowser L."/>
            <person name="Brooks S.Y."/>
            <person name="Carninci P."/>
            <person name="Chao Q."/>
            <person name="Choy N."/>
            <person name="Enju A."/>
            <person name="Goldsmith A.D."/>
            <person name="Gurjal M."/>
            <person name="Hansen N.F."/>
            <person name="Hayashizaki Y."/>
            <person name="Johnson-Hopson C."/>
            <person name="Hsuan V.W."/>
            <person name="Iida K."/>
            <person name="Karnes M."/>
            <person name="Khan S."/>
            <person name="Koesema E."/>
            <person name="Ishida J."/>
            <person name="Jiang P.X."/>
            <person name="Jones T."/>
            <person name="Kawai J."/>
            <person name="Kamiya A."/>
            <person name="Meyers C."/>
            <person name="Nakajima M."/>
            <person name="Narusaka M."/>
            <person name="Seki M."/>
            <person name="Sakurai T."/>
            <person name="Satou M."/>
            <person name="Tamse R."/>
            <person name="Vaysberg M."/>
            <person name="Wallender E.K."/>
            <person name="Wong C."/>
            <person name="Yamamura Y."/>
            <person name="Yuan S."/>
            <person name="Shinozaki K."/>
            <person name="Davis R.W."/>
            <person name="Theologis A."/>
            <person name="Ecker J.R."/>
        </authorList>
    </citation>
    <scope>NUCLEOTIDE SEQUENCE [LARGE SCALE MRNA]</scope>
    <source>
        <strain>cv. Columbia</strain>
    </source>
</reference>
<reference key="4">
    <citation type="submission" date="2002-03" db="EMBL/GenBank/DDBJ databases">
        <title>Full-length cDNA from Arabidopsis thaliana.</title>
        <authorList>
            <person name="Brover V.V."/>
            <person name="Troukhan M.E."/>
            <person name="Alexandrov N.A."/>
            <person name="Lu Y.-P."/>
            <person name="Flavell R.B."/>
            <person name="Feldmann K.A."/>
        </authorList>
    </citation>
    <scope>NUCLEOTIDE SEQUENCE [LARGE SCALE MRNA]</scope>
</reference>
<reference key="5">
    <citation type="journal article" date="2002" name="Trends Plant Sci.">
        <title>The Dof family of plant transcription factors.</title>
        <authorList>
            <person name="Yanagisawa S."/>
        </authorList>
    </citation>
    <scope>GENE FAMILY</scope>
    <scope>NOMENCLATURE</scope>
</reference>
<proteinExistence type="evidence at transcript level"/>